<accession>B1W444</accession>
<proteinExistence type="inferred from homology"/>
<gene>
    <name evidence="1" type="primary">rplJ</name>
    <name type="ordered locus">SGR_2871</name>
</gene>
<evidence type="ECO:0000255" key="1">
    <source>
        <dbReference type="HAMAP-Rule" id="MF_00362"/>
    </source>
</evidence>
<evidence type="ECO:0000256" key="2">
    <source>
        <dbReference type="SAM" id="MobiDB-lite"/>
    </source>
</evidence>
<evidence type="ECO:0000305" key="3"/>
<protein>
    <recommendedName>
        <fullName evidence="1">Large ribosomal subunit protein uL10</fullName>
    </recommendedName>
    <alternativeName>
        <fullName evidence="3">50S ribosomal protein L10</fullName>
    </alternativeName>
</protein>
<comment type="function">
    <text evidence="1">Forms part of the ribosomal stalk, playing a central role in the interaction of the ribosome with GTP-bound translation factors.</text>
</comment>
<comment type="subunit">
    <text evidence="1">Part of the ribosomal stalk of the 50S ribosomal subunit. The N-terminus interacts with L11 and the large rRNA to form the base of the stalk. The C-terminus forms an elongated spine to which L12 dimers bind in a sequential fashion forming a multimeric L10(L12)X complex.</text>
</comment>
<comment type="similarity">
    <text evidence="1">Belongs to the universal ribosomal protein uL10 family.</text>
</comment>
<feature type="chain" id="PRO_1000121018" description="Large ribosomal subunit protein uL10">
    <location>
        <begin position="1"/>
        <end position="185"/>
    </location>
</feature>
<feature type="region of interest" description="Disordered" evidence="2">
    <location>
        <begin position="165"/>
        <end position="185"/>
    </location>
</feature>
<reference key="1">
    <citation type="journal article" date="2008" name="J. Bacteriol.">
        <title>Genome sequence of the streptomycin-producing microorganism Streptomyces griseus IFO 13350.</title>
        <authorList>
            <person name="Ohnishi Y."/>
            <person name="Ishikawa J."/>
            <person name="Hara H."/>
            <person name="Suzuki H."/>
            <person name="Ikenoya M."/>
            <person name="Ikeda H."/>
            <person name="Yamashita A."/>
            <person name="Hattori M."/>
            <person name="Horinouchi S."/>
        </authorList>
    </citation>
    <scope>NUCLEOTIDE SEQUENCE [LARGE SCALE GENOMIC DNA]</scope>
    <source>
        <strain>JCM 4626 / CBS 651.72 / NBRC 13350 / KCC S-0626 / ISP 5235</strain>
    </source>
</reference>
<sequence length="185" mass="19484">MARPDKAAAVAELTDQFRSSNAAVLTEYRGLTVAQLKELRRSLGENAQYAVVKNTLTKIAANEAGIDTLDDLFSGPTAVAFVTGDPVESAKGLRDFAKDNPNLIIKGGVLDGKALSADEIKKLADLESREVLLSKLAGAFKGKQTQAAQVFQALPSKFVRTAEALRAKKEEQGGAGTPAPAEAAE</sequence>
<name>RL10_STRGG</name>
<organism>
    <name type="scientific">Streptomyces griseus subsp. griseus (strain JCM 4626 / CBS 651.72 / NBRC 13350 / KCC S-0626 / ISP 5235)</name>
    <dbReference type="NCBI Taxonomy" id="455632"/>
    <lineage>
        <taxon>Bacteria</taxon>
        <taxon>Bacillati</taxon>
        <taxon>Actinomycetota</taxon>
        <taxon>Actinomycetes</taxon>
        <taxon>Kitasatosporales</taxon>
        <taxon>Streptomycetaceae</taxon>
        <taxon>Streptomyces</taxon>
    </lineage>
</organism>
<keyword id="KW-0687">Ribonucleoprotein</keyword>
<keyword id="KW-0689">Ribosomal protein</keyword>
<keyword id="KW-0694">RNA-binding</keyword>
<keyword id="KW-0699">rRNA-binding</keyword>
<dbReference type="EMBL" id="AP009493">
    <property type="protein sequence ID" value="BAG19700.1"/>
    <property type="molecule type" value="Genomic_DNA"/>
</dbReference>
<dbReference type="RefSeq" id="WP_003966997.1">
    <property type="nucleotide sequence ID" value="NC_010572.1"/>
</dbReference>
<dbReference type="SMR" id="B1W444"/>
<dbReference type="GeneID" id="95484896"/>
<dbReference type="KEGG" id="sgr:SGR_2871"/>
<dbReference type="eggNOG" id="COG0244">
    <property type="taxonomic scope" value="Bacteria"/>
</dbReference>
<dbReference type="HOGENOM" id="CLU_092227_1_0_11"/>
<dbReference type="Proteomes" id="UP000001685">
    <property type="component" value="Chromosome"/>
</dbReference>
<dbReference type="GO" id="GO:0015934">
    <property type="term" value="C:large ribosomal subunit"/>
    <property type="evidence" value="ECO:0007669"/>
    <property type="project" value="InterPro"/>
</dbReference>
<dbReference type="GO" id="GO:0070180">
    <property type="term" value="F:large ribosomal subunit rRNA binding"/>
    <property type="evidence" value="ECO:0007669"/>
    <property type="project" value="UniProtKB-UniRule"/>
</dbReference>
<dbReference type="GO" id="GO:0003735">
    <property type="term" value="F:structural constituent of ribosome"/>
    <property type="evidence" value="ECO:0007669"/>
    <property type="project" value="InterPro"/>
</dbReference>
<dbReference type="GO" id="GO:0006412">
    <property type="term" value="P:translation"/>
    <property type="evidence" value="ECO:0007669"/>
    <property type="project" value="UniProtKB-UniRule"/>
</dbReference>
<dbReference type="CDD" id="cd05797">
    <property type="entry name" value="Ribosomal_L10"/>
    <property type="match status" value="1"/>
</dbReference>
<dbReference type="FunFam" id="3.30.70.1730:FF:000003">
    <property type="entry name" value="50S ribosomal protein L10"/>
    <property type="match status" value="1"/>
</dbReference>
<dbReference type="Gene3D" id="3.30.70.1730">
    <property type="match status" value="1"/>
</dbReference>
<dbReference type="Gene3D" id="6.10.250.290">
    <property type="match status" value="1"/>
</dbReference>
<dbReference type="HAMAP" id="MF_00362">
    <property type="entry name" value="Ribosomal_uL10"/>
    <property type="match status" value="1"/>
</dbReference>
<dbReference type="InterPro" id="IPR001790">
    <property type="entry name" value="Ribosomal_uL10"/>
</dbReference>
<dbReference type="InterPro" id="IPR043141">
    <property type="entry name" value="Ribosomal_uL10-like_sf"/>
</dbReference>
<dbReference type="InterPro" id="IPR022973">
    <property type="entry name" value="Ribosomal_uL10_bac"/>
</dbReference>
<dbReference type="InterPro" id="IPR047865">
    <property type="entry name" value="Ribosomal_uL10_bac_type"/>
</dbReference>
<dbReference type="InterPro" id="IPR002363">
    <property type="entry name" value="Ribosomal_uL10_CS_bac"/>
</dbReference>
<dbReference type="NCBIfam" id="NF000955">
    <property type="entry name" value="PRK00099.1-1"/>
    <property type="match status" value="1"/>
</dbReference>
<dbReference type="PANTHER" id="PTHR11560">
    <property type="entry name" value="39S RIBOSOMAL PROTEIN L10, MITOCHONDRIAL"/>
    <property type="match status" value="1"/>
</dbReference>
<dbReference type="Pfam" id="PF00466">
    <property type="entry name" value="Ribosomal_L10"/>
    <property type="match status" value="1"/>
</dbReference>
<dbReference type="SUPFAM" id="SSF160369">
    <property type="entry name" value="Ribosomal protein L10-like"/>
    <property type="match status" value="1"/>
</dbReference>
<dbReference type="PROSITE" id="PS01109">
    <property type="entry name" value="RIBOSOMAL_L10"/>
    <property type="match status" value="1"/>
</dbReference>